<feature type="chain" id="PRO_1000123861" description="Serine--tRNA ligase">
    <location>
        <begin position="1"/>
        <end position="444"/>
    </location>
</feature>
<feature type="binding site" evidence="1">
    <location>
        <begin position="243"/>
        <end position="245"/>
    </location>
    <ligand>
        <name>L-serine</name>
        <dbReference type="ChEBI" id="CHEBI:33384"/>
    </ligand>
</feature>
<feature type="binding site" evidence="1">
    <location>
        <begin position="274"/>
        <end position="276"/>
    </location>
    <ligand>
        <name>ATP</name>
        <dbReference type="ChEBI" id="CHEBI:30616"/>
    </ligand>
</feature>
<feature type="binding site" evidence="1">
    <location>
        <position position="297"/>
    </location>
    <ligand>
        <name>L-serine</name>
        <dbReference type="ChEBI" id="CHEBI:33384"/>
    </ligand>
</feature>
<feature type="binding site" evidence="1">
    <location>
        <begin position="361"/>
        <end position="364"/>
    </location>
    <ligand>
        <name>ATP</name>
        <dbReference type="ChEBI" id="CHEBI:30616"/>
    </ligand>
</feature>
<feature type="binding site" evidence="1">
    <location>
        <position position="397"/>
    </location>
    <ligand>
        <name>L-serine</name>
        <dbReference type="ChEBI" id="CHEBI:33384"/>
    </ligand>
</feature>
<gene>
    <name evidence="1" type="primary">serS</name>
    <name type="ordered locus">ACP_3008</name>
</gene>
<sequence>MLDLAFVRANLELVEARLRARGQNPAELLGDFAAVDQHRRERITEAEQLKATRNKLSEEVARLRKAKEDASAVMEETRQLKTKIEDLERAATEAEEQLRERMARIPNLPYEDVPTGASAEDNVEVKRWGTPREFDFAPKPHWELGEQLGILDFERAAKLSGARFAVYWAEGARLERALAAFMLDLHTREHGYTEVLPPLMVNSRSLFGTGQLPKFAEDLFRCEDGEPYQAGKYRENDHWLIPTAEVPLTNLFRDETLDDSQLSTSLVAHTSCFRSEAGSYGKDVRGIIRQHQFQKVELVKFTRPEDSAAEHEALTRHAETVLERLGLPYRRMLLCTGDMGFSSAKTYDLEVWLPGQQVYREISSCSNFDAFQARRAGIRYRPRGQGKSAHVHTLNGSGLAIGRTWLAILENYQQADGSVRIPEALIPYMGTEVIESRNVAQGAK</sequence>
<accession>C1F4G5</accession>
<organism>
    <name type="scientific">Acidobacterium capsulatum (strain ATCC 51196 / DSM 11244 / BCRC 80197 / JCM 7670 / NBRC 15755 / NCIMB 13165 / 161)</name>
    <dbReference type="NCBI Taxonomy" id="240015"/>
    <lineage>
        <taxon>Bacteria</taxon>
        <taxon>Pseudomonadati</taxon>
        <taxon>Acidobacteriota</taxon>
        <taxon>Terriglobia</taxon>
        <taxon>Terriglobales</taxon>
        <taxon>Acidobacteriaceae</taxon>
        <taxon>Acidobacterium</taxon>
    </lineage>
</organism>
<dbReference type="EC" id="6.1.1.11" evidence="1"/>
<dbReference type="EMBL" id="CP001472">
    <property type="protein sequence ID" value="ACO33447.1"/>
    <property type="molecule type" value="Genomic_DNA"/>
</dbReference>
<dbReference type="RefSeq" id="WP_015898056.1">
    <property type="nucleotide sequence ID" value="NC_012483.1"/>
</dbReference>
<dbReference type="SMR" id="C1F4G5"/>
<dbReference type="FunCoup" id="C1F4G5">
    <property type="interactions" value="525"/>
</dbReference>
<dbReference type="STRING" id="240015.ACP_3008"/>
<dbReference type="KEGG" id="aca:ACP_3008"/>
<dbReference type="eggNOG" id="COG0172">
    <property type="taxonomic scope" value="Bacteria"/>
</dbReference>
<dbReference type="HOGENOM" id="CLU_023797_1_1_0"/>
<dbReference type="InParanoid" id="C1F4G5"/>
<dbReference type="OrthoDB" id="9804647at2"/>
<dbReference type="UniPathway" id="UPA00906">
    <property type="reaction ID" value="UER00895"/>
</dbReference>
<dbReference type="Proteomes" id="UP000002207">
    <property type="component" value="Chromosome"/>
</dbReference>
<dbReference type="GO" id="GO:0005737">
    <property type="term" value="C:cytoplasm"/>
    <property type="evidence" value="ECO:0007669"/>
    <property type="project" value="UniProtKB-SubCell"/>
</dbReference>
<dbReference type="GO" id="GO:0005524">
    <property type="term" value="F:ATP binding"/>
    <property type="evidence" value="ECO:0007669"/>
    <property type="project" value="UniProtKB-UniRule"/>
</dbReference>
<dbReference type="GO" id="GO:0004828">
    <property type="term" value="F:serine-tRNA ligase activity"/>
    <property type="evidence" value="ECO:0007669"/>
    <property type="project" value="UniProtKB-UniRule"/>
</dbReference>
<dbReference type="GO" id="GO:0016260">
    <property type="term" value="P:selenocysteine biosynthetic process"/>
    <property type="evidence" value="ECO:0007669"/>
    <property type="project" value="UniProtKB-UniRule"/>
</dbReference>
<dbReference type="GO" id="GO:0006434">
    <property type="term" value="P:seryl-tRNA aminoacylation"/>
    <property type="evidence" value="ECO:0007669"/>
    <property type="project" value="UniProtKB-UniRule"/>
</dbReference>
<dbReference type="CDD" id="cd00770">
    <property type="entry name" value="SerRS_core"/>
    <property type="match status" value="1"/>
</dbReference>
<dbReference type="Gene3D" id="3.30.930.10">
    <property type="entry name" value="Bira Bifunctional Protein, Domain 2"/>
    <property type="match status" value="1"/>
</dbReference>
<dbReference type="Gene3D" id="1.10.287.40">
    <property type="entry name" value="Serine-tRNA synthetase, tRNA binding domain"/>
    <property type="match status" value="1"/>
</dbReference>
<dbReference type="HAMAP" id="MF_00176">
    <property type="entry name" value="Ser_tRNA_synth_type1"/>
    <property type="match status" value="1"/>
</dbReference>
<dbReference type="InterPro" id="IPR002314">
    <property type="entry name" value="aa-tRNA-synt_IIb"/>
</dbReference>
<dbReference type="InterPro" id="IPR006195">
    <property type="entry name" value="aa-tRNA-synth_II"/>
</dbReference>
<dbReference type="InterPro" id="IPR045864">
    <property type="entry name" value="aa-tRNA-synth_II/BPL/LPL"/>
</dbReference>
<dbReference type="InterPro" id="IPR002317">
    <property type="entry name" value="Ser-tRNA-ligase_type_1"/>
</dbReference>
<dbReference type="InterPro" id="IPR015866">
    <property type="entry name" value="Ser-tRNA-synth_1_N"/>
</dbReference>
<dbReference type="InterPro" id="IPR042103">
    <property type="entry name" value="SerRS_1_N_sf"/>
</dbReference>
<dbReference type="InterPro" id="IPR033729">
    <property type="entry name" value="SerRS_core"/>
</dbReference>
<dbReference type="InterPro" id="IPR010978">
    <property type="entry name" value="tRNA-bd_arm"/>
</dbReference>
<dbReference type="NCBIfam" id="TIGR00414">
    <property type="entry name" value="serS"/>
    <property type="match status" value="1"/>
</dbReference>
<dbReference type="PANTHER" id="PTHR43697:SF1">
    <property type="entry name" value="SERINE--TRNA LIGASE"/>
    <property type="match status" value="1"/>
</dbReference>
<dbReference type="PANTHER" id="PTHR43697">
    <property type="entry name" value="SERYL-TRNA SYNTHETASE"/>
    <property type="match status" value="1"/>
</dbReference>
<dbReference type="Pfam" id="PF02403">
    <property type="entry name" value="Seryl_tRNA_N"/>
    <property type="match status" value="1"/>
</dbReference>
<dbReference type="Pfam" id="PF00587">
    <property type="entry name" value="tRNA-synt_2b"/>
    <property type="match status" value="1"/>
</dbReference>
<dbReference type="PIRSF" id="PIRSF001529">
    <property type="entry name" value="Ser-tRNA-synth_IIa"/>
    <property type="match status" value="1"/>
</dbReference>
<dbReference type="PRINTS" id="PR00981">
    <property type="entry name" value="TRNASYNTHSER"/>
</dbReference>
<dbReference type="SUPFAM" id="SSF55681">
    <property type="entry name" value="Class II aaRS and biotin synthetases"/>
    <property type="match status" value="1"/>
</dbReference>
<dbReference type="SUPFAM" id="SSF46589">
    <property type="entry name" value="tRNA-binding arm"/>
    <property type="match status" value="1"/>
</dbReference>
<dbReference type="PROSITE" id="PS50862">
    <property type="entry name" value="AA_TRNA_LIGASE_II"/>
    <property type="match status" value="1"/>
</dbReference>
<comment type="function">
    <text evidence="1">Catalyzes the attachment of serine to tRNA(Ser). Is also able to aminoacylate tRNA(Sec) with serine, to form the misacylated tRNA L-seryl-tRNA(Sec), which will be further converted into selenocysteinyl-tRNA(Sec).</text>
</comment>
<comment type="catalytic activity">
    <reaction evidence="1">
        <text>tRNA(Ser) + L-serine + ATP = L-seryl-tRNA(Ser) + AMP + diphosphate + H(+)</text>
        <dbReference type="Rhea" id="RHEA:12292"/>
        <dbReference type="Rhea" id="RHEA-COMP:9669"/>
        <dbReference type="Rhea" id="RHEA-COMP:9703"/>
        <dbReference type="ChEBI" id="CHEBI:15378"/>
        <dbReference type="ChEBI" id="CHEBI:30616"/>
        <dbReference type="ChEBI" id="CHEBI:33019"/>
        <dbReference type="ChEBI" id="CHEBI:33384"/>
        <dbReference type="ChEBI" id="CHEBI:78442"/>
        <dbReference type="ChEBI" id="CHEBI:78533"/>
        <dbReference type="ChEBI" id="CHEBI:456215"/>
        <dbReference type="EC" id="6.1.1.11"/>
    </reaction>
</comment>
<comment type="catalytic activity">
    <reaction evidence="1">
        <text>tRNA(Sec) + L-serine + ATP = L-seryl-tRNA(Sec) + AMP + diphosphate + H(+)</text>
        <dbReference type="Rhea" id="RHEA:42580"/>
        <dbReference type="Rhea" id="RHEA-COMP:9742"/>
        <dbReference type="Rhea" id="RHEA-COMP:10128"/>
        <dbReference type="ChEBI" id="CHEBI:15378"/>
        <dbReference type="ChEBI" id="CHEBI:30616"/>
        <dbReference type="ChEBI" id="CHEBI:33019"/>
        <dbReference type="ChEBI" id="CHEBI:33384"/>
        <dbReference type="ChEBI" id="CHEBI:78442"/>
        <dbReference type="ChEBI" id="CHEBI:78533"/>
        <dbReference type="ChEBI" id="CHEBI:456215"/>
        <dbReference type="EC" id="6.1.1.11"/>
    </reaction>
</comment>
<comment type="pathway">
    <text evidence="1">Aminoacyl-tRNA biosynthesis; selenocysteinyl-tRNA(Sec) biosynthesis; L-seryl-tRNA(Sec) from L-serine and tRNA(Sec): step 1/1.</text>
</comment>
<comment type="subunit">
    <text evidence="1">Homodimer. The tRNA molecule binds across the dimer.</text>
</comment>
<comment type="subcellular location">
    <subcellularLocation>
        <location evidence="1">Cytoplasm</location>
    </subcellularLocation>
</comment>
<comment type="domain">
    <text evidence="1">Consists of two distinct domains, a catalytic core and a N-terminal extension that is involved in tRNA binding.</text>
</comment>
<comment type="similarity">
    <text evidence="1">Belongs to the class-II aminoacyl-tRNA synthetase family. Type-1 seryl-tRNA synthetase subfamily.</text>
</comment>
<name>SYS_ACIC5</name>
<reference key="1">
    <citation type="journal article" date="2009" name="Appl. Environ. Microbiol.">
        <title>Three genomes from the phylum Acidobacteria provide insight into the lifestyles of these microorganisms in soils.</title>
        <authorList>
            <person name="Ward N.L."/>
            <person name="Challacombe J.F."/>
            <person name="Janssen P.H."/>
            <person name="Henrissat B."/>
            <person name="Coutinho P.M."/>
            <person name="Wu M."/>
            <person name="Xie G."/>
            <person name="Haft D.H."/>
            <person name="Sait M."/>
            <person name="Badger J."/>
            <person name="Barabote R.D."/>
            <person name="Bradley B."/>
            <person name="Brettin T.S."/>
            <person name="Brinkac L.M."/>
            <person name="Bruce D."/>
            <person name="Creasy T."/>
            <person name="Daugherty S.C."/>
            <person name="Davidsen T.M."/>
            <person name="DeBoy R.T."/>
            <person name="Detter J.C."/>
            <person name="Dodson R.J."/>
            <person name="Durkin A.S."/>
            <person name="Ganapathy A."/>
            <person name="Gwinn-Giglio M."/>
            <person name="Han C.S."/>
            <person name="Khouri H."/>
            <person name="Kiss H."/>
            <person name="Kothari S.P."/>
            <person name="Madupu R."/>
            <person name="Nelson K.E."/>
            <person name="Nelson W.C."/>
            <person name="Paulsen I."/>
            <person name="Penn K."/>
            <person name="Ren Q."/>
            <person name="Rosovitz M.J."/>
            <person name="Selengut J.D."/>
            <person name="Shrivastava S."/>
            <person name="Sullivan S.A."/>
            <person name="Tapia R."/>
            <person name="Thompson L.S."/>
            <person name="Watkins K.L."/>
            <person name="Yang Q."/>
            <person name="Yu C."/>
            <person name="Zafar N."/>
            <person name="Zhou L."/>
            <person name="Kuske C.R."/>
        </authorList>
    </citation>
    <scope>NUCLEOTIDE SEQUENCE [LARGE SCALE GENOMIC DNA]</scope>
    <source>
        <strain>ATCC 51196 / DSM 11244 / BCRC 80197 / JCM 7670 / NBRC 15755 / NCIMB 13165 / 161</strain>
    </source>
</reference>
<proteinExistence type="inferred from homology"/>
<keyword id="KW-0030">Aminoacyl-tRNA synthetase</keyword>
<keyword id="KW-0067">ATP-binding</keyword>
<keyword id="KW-0963">Cytoplasm</keyword>
<keyword id="KW-0436">Ligase</keyword>
<keyword id="KW-0547">Nucleotide-binding</keyword>
<keyword id="KW-0648">Protein biosynthesis</keyword>
<keyword id="KW-1185">Reference proteome</keyword>
<protein>
    <recommendedName>
        <fullName evidence="1">Serine--tRNA ligase</fullName>
        <ecNumber evidence="1">6.1.1.11</ecNumber>
    </recommendedName>
    <alternativeName>
        <fullName evidence="1">Seryl-tRNA synthetase</fullName>
        <shortName evidence="1">SerRS</shortName>
    </alternativeName>
    <alternativeName>
        <fullName evidence="1">Seryl-tRNA(Ser/Sec) synthetase</fullName>
    </alternativeName>
</protein>
<evidence type="ECO:0000255" key="1">
    <source>
        <dbReference type="HAMAP-Rule" id="MF_00176"/>
    </source>
</evidence>